<organism>
    <name type="scientific">Epstein-Barr virus (strain B95-8)</name>
    <name type="common">HHV-4</name>
    <name type="synonym">Human herpesvirus 4</name>
    <dbReference type="NCBI Taxonomy" id="10377"/>
    <lineage>
        <taxon>Viruses</taxon>
        <taxon>Duplodnaviria</taxon>
        <taxon>Heunggongvirae</taxon>
        <taxon>Peploviricota</taxon>
        <taxon>Herviviricetes</taxon>
        <taxon>Herpesvirales</taxon>
        <taxon>Orthoherpesviridae</taxon>
        <taxon>Gammaherpesvirinae</taxon>
        <taxon>Lymphocryptovirus</taxon>
        <taxon>Lymphocryptovirus humangamma4</taxon>
        <taxon>Epstein-Barr virus (strain GD1)</taxon>
    </lineage>
</organism>
<sequence>MGDRSEGPGPTRPGPPGIGPEGPLGQLLRRHRSPSPTRGGQEPRRVRRRVLVQQEEEVVSGSPSGPRGDRSEGPGPTRPGPPGIGPEGPLGQLLRRHRSPSPTRGGQEPRRVRRRVLVQQEEEVVSGSPSGPRGDRSEGPGPTRPGPPGIGPEGPLGQLLRRHRSPSPTRGGQEPRRVRRRVLVQQEEEVVSGSPSGPRGDRSEGPGPTRPGPPGIGPEGPLGQLLRRHRSPSPTRGGQEPRRVRRRVLVQQEEEVVSGSPSGPRGDRSEGPGPTRPGPPGIGPEGPLGQLLRRHRSPSPTRGGQEPRRVRRRVLVQQEEEVVSGSPSGPRGDRSEGPGPTRPGPPGIGPEGPLGQLLRRHRSPSPTRGGQEPRRVRRRVLVQQEEEVVSGSPSGPRGDRSEGPGPTRPGPPGIGPEGPLGQLLRRHRSPSPTRGGQEPRRVRRRVLVQQEEEVVSGSPSGPLRPRPRPPARSLREWLLRIRDHFEPPTVTTQRQSVYIEEEEDED</sequence>
<gene>
    <name type="primary">EBNA-LP</name>
    <name type="synonym">EBNA5</name>
</gene>
<protein>
    <recommendedName>
        <fullName>Epstein-Barr nuclear antigen leader protein</fullName>
        <shortName>EBNA-LP</shortName>
        <shortName>EBV nuclear antigen leader protein</shortName>
    </recommendedName>
    <alternativeName>
        <fullName>Epstein-Barr nuclear antigen 5</fullName>
        <shortName>EBNA-5</shortName>
        <shortName>EBV nuclear antigen 5</shortName>
    </alternativeName>
</protein>
<reference key="1">
    <citation type="journal article" date="1984" name="Nature">
        <title>DNA sequence and expression of the B95-8 Epstein-Barr virus genome.</title>
        <authorList>
            <person name="Baer R."/>
            <person name="Bankier A.T."/>
            <person name="Biggin M.D."/>
            <person name="Deininger P.L."/>
            <person name="Farrell P.J."/>
            <person name="Gibson T.J."/>
            <person name="Hatfull G."/>
            <person name="Hudson G.S."/>
            <person name="Satchwell S.C."/>
            <person name="Seguin C."/>
            <person name="Tuffnell P.S."/>
            <person name="Barrell B.G."/>
        </authorList>
    </citation>
    <scope>NUCLEOTIDE SEQUENCE [LARGE SCALE GENOMIC DNA]</scope>
</reference>
<reference key="2">
    <citation type="journal article" date="2003" name="Virology">
        <title>Updated Epstein-Barr virus (EBV) DNA sequence and analysis of a promoter for the BART (CST, BARF0) RNAs of EBV.</title>
        <authorList>
            <person name="de Jesus O."/>
            <person name="Smith P.R."/>
            <person name="Spender L.C."/>
            <person name="Elgueta Karstegl C."/>
            <person name="Niller H.H."/>
            <person name="Huang D."/>
            <person name="Farrell P.J."/>
        </authorList>
    </citation>
    <scope>GENOME REANNOTATION</scope>
</reference>
<reference key="3">
    <citation type="journal article" date="2000" name="J. Virol.">
        <title>Conserved regions in the Epstein-Barr virus leader protein define distinct domains required for nuclear localization and transcriptional cooperation with EBNA2.</title>
        <authorList>
            <person name="Peng R."/>
            <person name="Tan J."/>
            <person name="Ling P.D."/>
        </authorList>
    </citation>
    <scope>SUBCELLULAR LOCATION</scope>
</reference>
<reference key="4">
    <citation type="journal article" date="2001" name="J. Gen. Virol.">
        <title>Epstein-Barr virus nuclear antigen 5 interacts with HAX-1, a possible component of the B-cell receptor signalling pathway.</title>
        <authorList>
            <person name="Dufva M."/>
            <person name="Olsson M."/>
            <person name="Rymo L."/>
        </authorList>
    </citation>
    <scope>INTERACTION WITH HUMAN HAX1</scope>
</reference>
<reference key="5">
    <citation type="journal article" date="2001" name="J. Virol.">
        <title>EBNA-LP associates with cellular proteins including DNA-PK and HA95.</title>
        <authorList>
            <person name="Han I."/>
            <person name="Harada S."/>
            <person name="Weaver D."/>
            <person name="Xue Y."/>
            <person name="Lane W."/>
            <person name="Orstavik S."/>
            <person name="Skalhegg B."/>
            <person name="Kieff E."/>
        </authorList>
    </citation>
    <scope>INTERACTION WITH HUMAN PRKDC AND AKAP8L</scope>
</reference>
<reference key="6">
    <citation type="journal article" date="2003" name="J. Gen. Virol.">
        <title>Physical interaction of Epstein-Barr virus (EBV) nuclear antigen leader protein (EBNA-LP) with human oestrogen-related receptor 1 (hERR1): hERR1 interacts with a conserved domain of EBNA-LP that is critical for EBV-induced B-cell immortalization.</title>
        <authorList>
            <person name="Igarashi M."/>
            <person name="Kawaguchi Y."/>
            <person name="Hirai K."/>
            <person name="Mizuno F."/>
        </authorList>
    </citation>
    <scope>INTERACTION WITH HUMAN ERR1</scope>
</reference>
<reference key="7">
    <citation type="journal article" date="2003" name="J. Gen. Virol.">
        <title>Identification of protein kinases responsible for phosphorylation of Epstein-Barr virus nuclear antigen leader protein at serine-35, which regulates its coactivator function.</title>
        <authorList>
            <person name="Kato K."/>
            <person name="Yokoyama A."/>
            <person name="Tohya Y."/>
            <person name="Akashi H."/>
            <person name="Nishiyama Y."/>
            <person name="Kawaguchi Y."/>
        </authorList>
    </citation>
    <scope>PHOSPHORYLATION AT SER-35</scope>
    <scope>MUTAGENESIS OF SER-35</scope>
</reference>
<reference key="8">
    <citation type="journal article" date="2005" name="EMBO J.">
        <title>Mediation of Epstein-Barr virus EBNA-LP transcriptional coactivation by Sp100.</title>
        <authorList>
            <person name="Ling P.D."/>
            <person name="Peng R.S."/>
            <person name="Nakajima A."/>
            <person name="Yu J.H."/>
            <person name="Tan J."/>
            <person name="Moses S.M."/>
            <person name="Yang W.H."/>
            <person name="Zhao B."/>
            <person name="Kieff E."/>
            <person name="Bloch K.D."/>
            <person name="Bloch D.B."/>
        </authorList>
    </citation>
    <scope>INTERACTION WITH HUMAN SP100</scope>
</reference>
<reference key="9">
    <citation type="journal article" date="2007" name="Blood">
        <title>Hsp72 up-regulates Epstein-Barr virus EBNALP coactivation with EBNA2.</title>
        <authorList>
            <person name="Peng C.W."/>
            <person name="Zhao B."/>
            <person name="Chen H.C."/>
            <person name="Chou M.L."/>
            <person name="Lai C.Y."/>
            <person name="Lin S.Z."/>
            <person name="Hsu H.Y."/>
            <person name="Kieff E."/>
        </authorList>
    </citation>
    <scope>INTERACTION WITH HUMAN HSPA2</scope>
</reference>
<proteinExistence type="evidence at protein level"/>
<organismHost>
    <name type="scientific">Homo sapiens</name>
    <name type="common">Human</name>
    <dbReference type="NCBI Taxonomy" id="9606"/>
</organismHost>
<name>EBNA5_EBVB9</name>
<evidence type="ECO:0000256" key="1">
    <source>
        <dbReference type="SAM" id="MobiDB-lite"/>
    </source>
</evidence>
<evidence type="ECO:0000269" key="2">
    <source>
    </source>
</evidence>
<evidence type="ECO:0000269" key="3">
    <source>
    </source>
</evidence>
<evidence type="ECO:0000269" key="4">
    <source>
    </source>
</evidence>
<evidence type="ECO:0000269" key="5">
    <source>
    </source>
</evidence>
<evidence type="ECO:0000269" key="6">
    <source>
    </source>
</evidence>
<evidence type="ECO:0000269" key="7">
    <source>
    </source>
</evidence>
<evidence type="ECO:0000269" key="8">
    <source>
    </source>
</evidence>
<evidence type="ECO:0000305" key="9"/>
<keyword id="KW-0002">3D-structure</keyword>
<keyword id="KW-0010">Activator</keyword>
<keyword id="KW-1048">Host nucleus</keyword>
<keyword id="KW-0945">Host-virus interaction</keyword>
<keyword id="KW-0597">Phosphoprotein</keyword>
<keyword id="KW-1185">Reference proteome</keyword>
<keyword id="KW-0804">Transcription</keyword>
<keyword id="KW-0805">Transcription regulation</keyword>
<dbReference type="EMBL" id="V01555">
    <property type="status" value="NOT_ANNOTATED_CDS"/>
    <property type="molecule type" value="Genomic_DNA"/>
</dbReference>
<dbReference type="EMBL" id="AJ507799">
    <property type="protein sequence ID" value="CAD53387.1"/>
    <property type="molecule type" value="Genomic_DNA"/>
</dbReference>
<dbReference type="RefSeq" id="YP_401636.1">
    <property type="nucleotide sequence ID" value="NC_007605.1"/>
</dbReference>
<dbReference type="PDB" id="5X8N">
    <property type="method" value="X-ray"/>
    <property type="resolution" value="2.15 A"/>
    <property type="chains" value="B=425-446"/>
</dbReference>
<dbReference type="PDBsum" id="5X8N"/>
<dbReference type="SMR" id="Q8AZK7"/>
<dbReference type="BioGRID" id="971788">
    <property type="interactions" value="154"/>
</dbReference>
<dbReference type="DIP" id="DIP-39599N"/>
<dbReference type="IntAct" id="Q8AZK7">
    <property type="interactions" value="192"/>
</dbReference>
<dbReference type="MINT" id="Q8AZK7"/>
<dbReference type="iPTMnet" id="Q8AZK7"/>
<dbReference type="DNASU" id="3783746"/>
<dbReference type="GeneID" id="3783746"/>
<dbReference type="KEGG" id="vg:3783746"/>
<dbReference type="Proteomes" id="UP000153037">
    <property type="component" value="Segment"/>
</dbReference>
<dbReference type="GO" id="GO:0042025">
    <property type="term" value="C:host cell nucleus"/>
    <property type="evidence" value="ECO:0000314"/>
    <property type="project" value="UniProtKB"/>
</dbReference>
<dbReference type="GO" id="GO:0075341">
    <property type="term" value="C:host cell PML body"/>
    <property type="evidence" value="ECO:0000314"/>
    <property type="project" value="BHF-UCL"/>
</dbReference>
<dbReference type="GO" id="GO:0003713">
    <property type="term" value="F:transcription coactivator activity"/>
    <property type="evidence" value="ECO:0000314"/>
    <property type="project" value="BHF-UCL"/>
</dbReference>
<dbReference type="GO" id="GO:0039695">
    <property type="term" value="P:DNA-templated viral transcription"/>
    <property type="evidence" value="ECO:0000314"/>
    <property type="project" value="UniProtKB"/>
</dbReference>
<dbReference type="GO" id="GO:0075342">
    <property type="term" value="P:symbiont-mediated disruption of host cell PML body"/>
    <property type="evidence" value="ECO:0000314"/>
    <property type="project" value="BHF-UCL"/>
</dbReference>
<dbReference type="InterPro" id="IPR005030">
    <property type="entry name" value="Herpes_LP"/>
</dbReference>
<dbReference type="Pfam" id="PF03363">
    <property type="entry name" value="Herpes_LP"/>
    <property type="match status" value="6"/>
</dbReference>
<comment type="function">
    <text>Plays an important role in the establishment of B-cell immortalization by acting as an EBNA2 coactivator. This transcriptional activation preferentially enhances the expression of the major viral protein LMP1. The interaction between EBNA-LP and host SP100 correlates with coactivation of EBNA2 and the relocalization of SP100 from PML nuclear bodies into nucleoplasm.</text>
</comment>
<comment type="subunit">
    <text evidence="3 4 5 7 8">Homooligomer. Interacts with host SP100; this interaction is important for EBNA-LP coactivator activity. Interacts with host HAX1, ERR1 and HSPA2. Interacts with host PRKDC and AKAP8L; these interactions modulate the coactivator function of EBNA-LP.</text>
</comment>
<comment type="interaction">
    <interactant intactId="EBI-1185167">
        <id>Q8AZK7</id>
    </interactant>
    <interactant intactId="EBI-355275">
        <id>O95816</id>
        <label>BAG2</label>
    </interactant>
    <organismsDiffer>true</organismsDiffer>
    <experiments>3</experiments>
</comment>
<comment type="interaction">
    <interactant intactId="EBI-1185167">
        <id>Q8AZK7</id>
    </interactant>
    <interactant intactId="EBI-309231">
        <id>Q9JLV1</id>
        <label>Bag3</label>
    </interactant>
    <organismsDiffer>true</organismsDiffer>
    <experiments>2</experiments>
</comment>
<comment type="interaction">
    <interactant intactId="EBI-1185167">
        <id>Q8AZK7</id>
    </interactant>
    <interactant intactId="EBI-625922">
        <id>Q8N726</id>
        <label>CDKN2A</label>
    </interactant>
    <organismsDiffer>true</organismsDiffer>
    <experiments>5</experiments>
</comment>
<comment type="interaction">
    <interactant intactId="EBI-1185167">
        <id>Q8AZK7</id>
    </interactant>
    <interactant intactId="EBI-351962">
        <id>P17844</id>
        <label>DDX5</label>
    </interactant>
    <organismsDiffer>true</organismsDiffer>
    <experiments>2</experiments>
</comment>
<comment type="interaction">
    <interactant intactId="EBI-1185167">
        <id>Q8AZK7</id>
    </interactant>
    <interactant intactId="EBI-5655937">
        <id>O75953</id>
        <label>DNAJB5</label>
    </interactant>
    <organismsDiffer>true</organismsDiffer>
    <experiments>3</experiments>
</comment>
<comment type="interaction">
    <interactant intactId="EBI-1185167">
        <id>Q8AZK7</id>
    </interactant>
    <interactant intactId="EBI-308629">
        <id>P56524</id>
        <label>HDAC4</label>
    </interactant>
    <organismsDiffer>true</organismsDiffer>
    <experiments>5</experiments>
</comment>
<comment type="interaction">
    <interactant intactId="EBI-1185167">
        <id>Q8AZK7</id>
    </interactant>
    <interactant intactId="EBI-304185">
        <id>P61978</id>
        <label>HNRNPK</label>
    </interactant>
    <organismsDiffer>true</organismsDiffer>
    <experiments>2</experiments>
</comment>
<comment type="interaction">
    <interactant intactId="EBI-1185167">
        <id>Q8AZK7</id>
    </interactant>
    <interactant intactId="EBI-486809">
        <id>P52272</id>
        <label>HNRNPM</label>
    </interactant>
    <organismsDiffer>true</organismsDiffer>
    <experiments>2</experiments>
</comment>
<comment type="interaction">
    <interactant intactId="EBI-1185167">
        <id>Q8AZK7</id>
    </interactant>
    <interactant intactId="EBI-629985">
        <id>P08107</id>
        <label>HSPA1B</label>
    </interactant>
    <organismsDiffer>true</organismsDiffer>
    <experiments>3</experiments>
</comment>
<comment type="interaction">
    <interactant intactId="EBI-1185167">
        <id>Q8AZK7</id>
    </interactant>
    <interactant intactId="EBI-351896">
        <id>P11142</id>
        <label>HSPA8</label>
    </interactant>
    <organismsDiffer>true</organismsDiffer>
    <experiments>3</experiments>
</comment>
<comment type="interaction">
    <interactant intactId="EBI-1185167">
        <id>Q8AZK7</id>
    </interactant>
    <interactant intactId="EBI-346967">
        <id>P19338</id>
        <label>NCL</label>
    </interactant>
    <organismsDiffer>true</organismsDiffer>
    <experiments>2</experiments>
</comment>
<comment type="interaction">
    <interactant intactId="EBI-1185167">
        <id>Q8AZK7</id>
    </interactant>
    <interactant intactId="EBI-350527">
        <id>Q15233</id>
        <label>NONO</label>
    </interactant>
    <organismsDiffer>true</organismsDiffer>
    <experiments>2</experiments>
</comment>
<comment type="interaction">
    <interactant intactId="EBI-1185167">
        <id>Q8AZK7</id>
    </interactant>
    <interactant intactId="EBI-357648">
        <id>Q13200</id>
        <label>PSMD2</label>
    </interactant>
    <organismsDiffer>true</organismsDiffer>
    <experiments>2</experiments>
</comment>
<comment type="interaction">
    <interactant intactId="EBI-1185167">
        <id>Q8AZK7</id>
    </interactant>
    <interactant intactId="EBI-355453">
        <id>P23246</id>
        <label>SFPQ</label>
    </interactant>
    <organismsDiffer>true</organismsDiffer>
    <experiments>2</experiments>
</comment>
<comment type="interaction">
    <interactant intactId="EBI-1185167">
        <id>Q8AZK7</id>
    </interactant>
    <interactant intactId="EBI-487083">
        <id>P68363</id>
        <label>TUBA1B</label>
    </interactant>
    <organismsDiffer>true</organismsDiffer>
    <experiments>3</experiments>
</comment>
<comment type="interaction">
    <interactant intactId="EBI-1185167">
        <id>Q8AZK7</id>
    </interactant>
    <interactant intactId="EBI-350864">
        <id>P07437</id>
        <label>TUBB</label>
    </interactant>
    <organismsDiffer>true</organismsDiffer>
    <experiments>3</experiments>
</comment>
<comment type="subcellular location">
    <subcellularLocation>
        <location evidence="2">Host nucleus</location>
    </subcellularLocation>
</comment>
<comment type="PTM">
    <text evidence="6">Phosphorylated by the cellular protein kinase cdc2.</text>
</comment>
<comment type="similarity">
    <text evidence="9">Belongs to the lymphocryptovirus EBNA-LP family.</text>
</comment>
<feature type="chain" id="PRO_0000376060" description="Epstein-Barr nuclear antigen leader protein">
    <location>
        <begin position="1"/>
        <end position="506"/>
    </location>
</feature>
<feature type="region of interest" description="Disordered" evidence="1">
    <location>
        <begin position="1"/>
        <end position="470"/>
    </location>
</feature>
<feature type="region of interest" description="Disordered" evidence="1">
    <location>
        <begin position="485"/>
        <end position="506"/>
    </location>
</feature>
<feature type="modified residue" description="Phosphoserine; by host" evidence="6">
    <location>
        <position position="35"/>
    </location>
</feature>
<feature type="mutagenesis site" description="95% loss of phosphorylation." evidence="6">
    <original>S</original>
    <variation>A</variation>
    <location>
        <position position="35"/>
    </location>
</feature>
<accession>Q8AZK7</accession>